<reference key="1">
    <citation type="journal article" date="2005" name="Eur. J. Clin. Invest.">
        <title>A cancer-specific transcriptional signature in human neoplasia.</title>
        <authorList>
            <person name="Nicassio F."/>
            <person name="Bianchi F."/>
            <person name="Capra M."/>
            <person name="Vecchi M."/>
            <person name="Confalonieri S."/>
            <person name="Bianchi M."/>
            <person name="Pajalunga D."/>
            <person name="Crescenzi M."/>
            <person name="Bonapace I.M."/>
            <person name="Di Fiore P.P."/>
        </authorList>
    </citation>
    <scope>NUCLEOTIDE SEQUENCE [MRNA]</scope>
    <scope>VARIANT TYR-800</scope>
</reference>
<reference key="2">
    <citation type="journal article" date="2006" name="Nature">
        <title>DNA sequence and analysis of human chromosome 8.</title>
        <authorList>
            <person name="Nusbaum C."/>
            <person name="Mikkelsen T.S."/>
            <person name="Zody M.C."/>
            <person name="Asakawa S."/>
            <person name="Taudien S."/>
            <person name="Garber M."/>
            <person name="Kodira C.D."/>
            <person name="Schueler M.G."/>
            <person name="Shimizu A."/>
            <person name="Whittaker C.A."/>
            <person name="Chang J.L."/>
            <person name="Cuomo C.A."/>
            <person name="Dewar K."/>
            <person name="FitzGerald M.G."/>
            <person name="Yang X."/>
            <person name="Allen N.R."/>
            <person name="Anderson S."/>
            <person name="Asakawa T."/>
            <person name="Blechschmidt K."/>
            <person name="Bloom T."/>
            <person name="Borowsky M.L."/>
            <person name="Butler J."/>
            <person name="Cook A."/>
            <person name="Corum B."/>
            <person name="DeArellano K."/>
            <person name="DeCaprio D."/>
            <person name="Dooley K.T."/>
            <person name="Dorris L. III"/>
            <person name="Engels R."/>
            <person name="Gloeckner G."/>
            <person name="Hafez N."/>
            <person name="Hagopian D.S."/>
            <person name="Hall J.L."/>
            <person name="Ishikawa S.K."/>
            <person name="Jaffe D.B."/>
            <person name="Kamat A."/>
            <person name="Kudoh J."/>
            <person name="Lehmann R."/>
            <person name="Lokitsang T."/>
            <person name="Macdonald P."/>
            <person name="Major J.E."/>
            <person name="Matthews C.D."/>
            <person name="Mauceli E."/>
            <person name="Menzel U."/>
            <person name="Mihalev A.H."/>
            <person name="Minoshima S."/>
            <person name="Murayama Y."/>
            <person name="Naylor J.W."/>
            <person name="Nicol R."/>
            <person name="Nguyen C."/>
            <person name="O'Leary S.B."/>
            <person name="O'Neill K."/>
            <person name="Parker S.C.J."/>
            <person name="Polley A."/>
            <person name="Raymond C.K."/>
            <person name="Reichwald K."/>
            <person name="Rodriguez J."/>
            <person name="Sasaki T."/>
            <person name="Schilhabel M."/>
            <person name="Siddiqui R."/>
            <person name="Smith C.L."/>
            <person name="Sneddon T.P."/>
            <person name="Talamas J.A."/>
            <person name="Tenzin P."/>
            <person name="Topham K."/>
            <person name="Venkataraman V."/>
            <person name="Wen G."/>
            <person name="Yamazaki S."/>
            <person name="Young S.K."/>
            <person name="Zeng Q."/>
            <person name="Zimmer A.R."/>
            <person name="Rosenthal A."/>
            <person name="Birren B.W."/>
            <person name="Platzer M."/>
            <person name="Shimizu N."/>
            <person name="Lander E.S."/>
        </authorList>
    </citation>
    <scope>NUCLEOTIDE SEQUENCE [LARGE SCALE GENOMIC DNA]</scope>
</reference>
<reference key="3">
    <citation type="journal article" date="2004" name="Nat. Genet.">
        <title>Complete sequencing and characterization of 21,243 full-length human cDNAs.</title>
        <authorList>
            <person name="Ota T."/>
            <person name="Suzuki Y."/>
            <person name="Nishikawa T."/>
            <person name="Otsuki T."/>
            <person name="Sugiyama T."/>
            <person name="Irie R."/>
            <person name="Wakamatsu A."/>
            <person name="Hayashi K."/>
            <person name="Sato H."/>
            <person name="Nagai K."/>
            <person name="Kimura K."/>
            <person name="Makita H."/>
            <person name="Sekine M."/>
            <person name="Obayashi M."/>
            <person name="Nishi T."/>
            <person name="Shibahara T."/>
            <person name="Tanaka T."/>
            <person name="Ishii S."/>
            <person name="Yamamoto J."/>
            <person name="Saito K."/>
            <person name="Kawai Y."/>
            <person name="Isono Y."/>
            <person name="Nakamura Y."/>
            <person name="Nagahari K."/>
            <person name="Murakami K."/>
            <person name="Yasuda T."/>
            <person name="Iwayanagi T."/>
            <person name="Wagatsuma M."/>
            <person name="Shiratori A."/>
            <person name="Sudo H."/>
            <person name="Hosoiri T."/>
            <person name="Kaku Y."/>
            <person name="Kodaira H."/>
            <person name="Kondo H."/>
            <person name="Sugawara M."/>
            <person name="Takahashi M."/>
            <person name="Kanda K."/>
            <person name="Yokoi T."/>
            <person name="Furuya T."/>
            <person name="Kikkawa E."/>
            <person name="Omura Y."/>
            <person name="Abe K."/>
            <person name="Kamihara K."/>
            <person name="Katsuta N."/>
            <person name="Sato K."/>
            <person name="Tanikawa M."/>
            <person name="Yamazaki M."/>
            <person name="Ninomiya K."/>
            <person name="Ishibashi T."/>
            <person name="Yamashita H."/>
            <person name="Murakawa K."/>
            <person name="Fujimori K."/>
            <person name="Tanai H."/>
            <person name="Kimata M."/>
            <person name="Watanabe M."/>
            <person name="Hiraoka S."/>
            <person name="Chiba Y."/>
            <person name="Ishida S."/>
            <person name="Ono Y."/>
            <person name="Takiguchi S."/>
            <person name="Watanabe S."/>
            <person name="Yosida M."/>
            <person name="Hotuta T."/>
            <person name="Kusano J."/>
            <person name="Kanehori K."/>
            <person name="Takahashi-Fujii A."/>
            <person name="Hara H."/>
            <person name="Tanase T.-O."/>
            <person name="Nomura Y."/>
            <person name="Togiya S."/>
            <person name="Komai F."/>
            <person name="Hara R."/>
            <person name="Takeuchi K."/>
            <person name="Arita M."/>
            <person name="Imose N."/>
            <person name="Musashino K."/>
            <person name="Yuuki H."/>
            <person name="Oshima A."/>
            <person name="Sasaki N."/>
            <person name="Aotsuka S."/>
            <person name="Yoshikawa Y."/>
            <person name="Matsunawa H."/>
            <person name="Ichihara T."/>
            <person name="Shiohata N."/>
            <person name="Sano S."/>
            <person name="Moriya S."/>
            <person name="Momiyama H."/>
            <person name="Satoh N."/>
            <person name="Takami S."/>
            <person name="Terashima Y."/>
            <person name="Suzuki O."/>
            <person name="Nakagawa S."/>
            <person name="Senoh A."/>
            <person name="Mizoguchi H."/>
            <person name="Goto Y."/>
            <person name="Shimizu F."/>
            <person name="Wakebe H."/>
            <person name="Hishigaki H."/>
            <person name="Watanabe T."/>
            <person name="Sugiyama A."/>
            <person name="Takemoto M."/>
            <person name="Kawakami B."/>
            <person name="Yamazaki M."/>
            <person name="Watanabe K."/>
            <person name="Kumagai A."/>
            <person name="Itakura S."/>
            <person name="Fukuzumi Y."/>
            <person name="Fujimori Y."/>
            <person name="Komiyama M."/>
            <person name="Tashiro H."/>
            <person name="Tanigami A."/>
            <person name="Fujiwara T."/>
            <person name="Ono T."/>
            <person name="Yamada K."/>
            <person name="Fujii Y."/>
            <person name="Ozaki K."/>
            <person name="Hirao M."/>
            <person name="Ohmori Y."/>
            <person name="Kawabata A."/>
            <person name="Hikiji T."/>
            <person name="Kobatake N."/>
            <person name="Inagaki H."/>
            <person name="Ikema Y."/>
            <person name="Okamoto S."/>
            <person name="Okitani R."/>
            <person name="Kawakami T."/>
            <person name="Noguchi S."/>
            <person name="Itoh T."/>
            <person name="Shigeta K."/>
            <person name="Senba T."/>
            <person name="Matsumura K."/>
            <person name="Nakajima Y."/>
            <person name="Mizuno T."/>
            <person name="Morinaga M."/>
            <person name="Sasaki M."/>
            <person name="Togashi T."/>
            <person name="Oyama M."/>
            <person name="Hata H."/>
            <person name="Watanabe M."/>
            <person name="Komatsu T."/>
            <person name="Mizushima-Sugano J."/>
            <person name="Satoh T."/>
            <person name="Shirai Y."/>
            <person name="Takahashi Y."/>
            <person name="Nakagawa K."/>
            <person name="Okumura K."/>
            <person name="Nagase T."/>
            <person name="Nomura N."/>
            <person name="Kikuchi H."/>
            <person name="Masuho Y."/>
            <person name="Yamashita R."/>
            <person name="Nakai K."/>
            <person name="Yada T."/>
            <person name="Nakamura Y."/>
            <person name="Ohara O."/>
            <person name="Isogai T."/>
            <person name="Sugano S."/>
        </authorList>
    </citation>
    <scope>NUCLEOTIDE SEQUENCE [LARGE SCALE MRNA] OF 144-838</scope>
    <scope>VARIANT TYR-800</scope>
</reference>
<reference key="4">
    <citation type="journal article" date="2007" name="BMC Genomics">
        <title>The full-ORF clone resource of the German cDNA consortium.</title>
        <authorList>
            <person name="Bechtel S."/>
            <person name="Rosenfelder H."/>
            <person name="Duda A."/>
            <person name="Schmidt C.P."/>
            <person name="Ernst U."/>
            <person name="Wellenreuther R."/>
            <person name="Mehrle A."/>
            <person name="Schuster C."/>
            <person name="Bahr A."/>
            <person name="Bloecker H."/>
            <person name="Heubner D."/>
            <person name="Hoerlein A."/>
            <person name="Michel G."/>
            <person name="Wedler H."/>
            <person name="Koehrer K."/>
            <person name="Ottenwaelder B."/>
            <person name="Poustka A."/>
            <person name="Wiemann S."/>
            <person name="Schupp I."/>
        </authorList>
    </citation>
    <scope>NUCLEOTIDE SEQUENCE [LARGE SCALE MRNA] OF 336-838</scope>
    <scope>VARIANT TYR-800</scope>
    <source>
        <tissue>Lymph node</tissue>
    </source>
</reference>
<reference key="5">
    <citation type="journal article" date="2008" name="J. Proteome Res.">
        <title>Combining protein-based IMAC, peptide-based IMAC, and MudPIT for efficient phosphoproteomic analysis.</title>
        <authorList>
            <person name="Cantin G.T."/>
            <person name="Yi W."/>
            <person name="Lu B."/>
            <person name="Park S.K."/>
            <person name="Xu T."/>
            <person name="Lee J.-D."/>
            <person name="Yates J.R. III"/>
        </authorList>
    </citation>
    <scope>IDENTIFICATION BY MASS SPECTROMETRY [LARGE SCALE ANALYSIS]</scope>
    <source>
        <tissue>Cervix carcinoma</tissue>
    </source>
</reference>
<reference key="6">
    <citation type="journal article" date="2008" name="Mol. Cell">
        <title>Kinase-selective enrichment enables quantitative phosphoproteomics of the kinome across the cell cycle.</title>
        <authorList>
            <person name="Daub H."/>
            <person name="Olsen J.V."/>
            <person name="Bairlein M."/>
            <person name="Gnad F."/>
            <person name="Oppermann F.S."/>
            <person name="Korner R."/>
            <person name="Greff Z."/>
            <person name="Keri G."/>
            <person name="Stemmann O."/>
            <person name="Mann M."/>
        </authorList>
    </citation>
    <scope>PHOSPHORYLATION [LARGE SCALE ANALYSIS] AT SER-340</scope>
    <scope>IDENTIFICATION BY MASS SPECTROMETRY [LARGE SCALE ANALYSIS]</scope>
    <source>
        <tissue>Cervix carcinoma</tissue>
    </source>
</reference>
<reference key="7">
    <citation type="journal article" date="2008" name="Proc. Natl. Acad. Sci. U.S.A.">
        <title>A quantitative atlas of mitotic phosphorylation.</title>
        <authorList>
            <person name="Dephoure N."/>
            <person name="Zhou C."/>
            <person name="Villen J."/>
            <person name="Beausoleil S.A."/>
            <person name="Bakalarski C.E."/>
            <person name="Elledge S.J."/>
            <person name="Gygi S.P."/>
        </authorList>
    </citation>
    <scope>PHOSPHORYLATION [LARGE SCALE ANALYSIS] AT SER-340 AND SER-671</scope>
    <scope>IDENTIFICATION BY MASS SPECTROMETRY [LARGE SCALE ANALYSIS]</scope>
    <source>
        <tissue>Cervix carcinoma</tissue>
    </source>
</reference>
<reference key="8">
    <citation type="journal article" date="2009" name="Sci. Signal.">
        <title>Quantitative phosphoproteomic analysis of T cell receptor signaling reveals system-wide modulation of protein-protein interactions.</title>
        <authorList>
            <person name="Mayya V."/>
            <person name="Lundgren D.H."/>
            <person name="Hwang S.-I."/>
            <person name="Rezaul K."/>
            <person name="Wu L."/>
            <person name="Eng J.K."/>
            <person name="Rodionov V."/>
            <person name="Han D.K."/>
        </authorList>
    </citation>
    <scope>IDENTIFICATION BY MASS SPECTROMETRY [LARGE SCALE ANALYSIS]</scope>
    <source>
        <tissue>Leukemic T-cell</tissue>
    </source>
</reference>
<reference key="9">
    <citation type="journal article" date="2010" name="Sci. Signal.">
        <title>Quantitative phosphoproteomics reveals widespread full phosphorylation site occupancy during mitosis.</title>
        <authorList>
            <person name="Olsen J.V."/>
            <person name="Vermeulen M."/>
            <person name="Santamaria A."/>
            <person name="Kumar C."/>
            <person name="Miller M.L."/>
            <person name="Jensen L.J."/>
            <person name="Gnad F."/>
            <person name="Cox J."/>
            <person name="Jensen T.S."/>
            <person name="Nigg E.A."/>
            <person name="Brunak S."/>
            <person name="Mann M."/>
        </authorList>
    </citation>
    <scope>PHOSPHORYLATION [LARGE SCALE ANALYSIS] AT SER-671</scope>
    <scope>IDENTIFICATION BY MASS SPECTROMETRY [LARGE SCALE ANALYSIS]</scope>
    <source>
        <tissue>Cervix carcinoma</tissue>
    </source>
</reference>
<reference key="10">
    <citation type="journal article" date="2011" name="BMC Syst. Biol.">
        <title>Initial characterization of the human central proteome.</title>
        <authorList>
            <person name="Burkard T.R."/>
            <person name="Planyavsky M."/>
            <person name="Kaupe I."/>
            <person name="Breitwieser F.P."/>
            <person name="Buerckstuemmer T."/>
            <person name="Bennett K.L."/>
            <person name="Superti-Furga G."/>
            <person name="Colinge J."/>
        </authorList>
    </citation>
    <scope>IDENTIFICATION BY MASS SPECTROMETRY [LARGE SCALE ANALYSIS]</scope>
</reference>
<reference key="11">
    <citation type="journal article" date="2013" name="J. Proteome Res.">
        <title>Toward a comprehensive characterization of a human cancer cell phosphoproteome.</title>
        <authorList>
            <person name="Zhou H."/>
            <person name="Di Palma S."/>
            <person name="Preisinger C."/>
            <person name="Peng M."/>
            <person name="Polat A.N."/>
            <person name="Heck A.J."/>
            <person name="Mohammed S."/>
        </authorList>
    </citation>
    <scope>PHOSPHORYLATION [LARGE SCALE ANALYSIS] AT SER-332 AND SER-828</scope>
    <scope>IDENTIFICATION BY MASS SPECTROMETRY [LARGE SCALE ANALYSIS]</scope>
    <source>
        <tissue>Cervix carcinoma</tissue>
        <tissue>Erythroleukemia</tissue>
    </source>
</reference>
<reference key="12">
    <citation type="journal article" date="2014" name="J. Proteomics">
        <title>An enzyme assisted RP-RPLC approach for in-depth analysis of human liver phosphoproteome.</title>
        <authorList>
            <person name="Bian Y."/>
            <person name="Song C."/>
            <person name="Cheng K."/>
            <person name="Dong M."/>
            <person name="Wang F."/>
            <person name="Huang J."/>
            <person name="Sun D."/>
            <person name="Wang L."/>
            <person name="Ye M."/>
            <person name="Zou H."/>
        </authorList>
    </citation>
    <scope>PHOSPHORYLATION [LARGE SCALE ANALYSIS] AT SER-671</scope>
    <scope>IDENTIFICATION BY MASS SPECTROMETRY [LARGE SCALE ANALYSIS]</scope>
    <source>
        <tissue>Liver</tissue>
    </source>
</reference>
<reference key="13">
    <citation type="journal article" date="2017" name="Nat. Cell Biol.">
        <title>TBC1D23 is a bridging factor for endosomal vesicle capture by golgins at the trans-Golgi.</title>
        <authorList>
            <person name="Shin J.J.H."/>
            <person name="Gillingham A.K."/>
            <person name="Begum F."/>
            <person name="Chadwick J."/>
            <person name="Munro S."/>
        </authorList>
    </citation>
    <scope>INTERACTION WITH GOLGA1; GOLGA4 AND TBC1D23</scope>
    <scope>SUBCELLULAR LOCATION</scope>
</reference>
<reference key="14">
    <citation type="journal article" date="2018" name="Nat. Commun.">
        <title>The WDR11 complex facilitates the tethering of AP-1-derived vesicles.</title>
        <authorList>
            <person name="Navarro Negredo P."/>
            <person name="Edgar J.R."/>
            <person name="Manna P.T."/>
            <person name="Antrobus R."/>
            <person name="Robinson M.S."/>
        </authorList>
    </citation>
    <scope>FUNCTION</scope>
    <scope>SUBCELLULAR LOCATION</scope>
    <scope>IDENTIFICATION IN A COMPLEX WITH C17ORF75 AND WDR11</scope>
</reference>
<feature type="chain" id="PRO_0000282552" description="Protein FAM91A1">
    <location>
        <begin position="1"/>
        <end position="838"/>
    </location>
</feature>
<feature type="region of interest" description="Disordered" evidence="1">
    <location>
        <begin position="334"/>
        <end position="367"/>
    </location>
</feature>
<feature type="region of interest" description="Disordered" evidence="1">
    <location>
        <begin position="670"/>
        <end position="690"/>
    </location>
</feature>
<feature type="compositionally biased region" description="Polar residues" evidence="1">
    <location>
        <begin position="340"/>
        <end position="367"/>
    </location>
</feature>
<feature type="compositionally biased region" description="Basic and acidic residues" evidence="1">
    <location>
        <begin position="670"/>
        <end position="680"/>
    </location>
</feature>
<feature type="modified residue" description="Phosphoserine" evidence="11">
    <location>
        <position position="332"/>
    </location>
</feature>
<feature type="modified residue" description="Phosphoserine" evidence="8 9">
    <location>
        <position position="340"/>
    </location>
</feature>
<feature type="modified residue" description="Phosphoserine" evidence="8 10 12">
    <location>
        <position position="671"/>
    </location>
</feature>
<feature type="modified residue" description="Phosphoserine" evidence="11">
    <location>
        <position position="828"/>
    </location>
</feature>
<feature type="sequence variant" id="VAR_057768" description="In dbSNP:rs6470187.">
    <original>I</original>
    <variation>V</variation>
    <location>
        <position position="704"/>
    </location>
</feature>
<feature type="sequence variant" id="VAR_067449" description="In dbSNP:rs1946586." evidence="2 3 6">
    <original>C</original>
    <variation>Y</variation>
    <location>
        <position position="800"/>
    </location>
</feature>
<feature type="helix" evidence="13">
    <location>
        <begin position="3"/>
        <end position="10"/>
    </location>
</feature>
<feature type="helix" evidence="13">
    <location>
        <begin position="20"/>
        <end position="25"/>
    </location>
</feature>
<feature type="turn" evidence="13">
    <location>
        <begin position="26"/>
        <end position="28"/>
    </location>
</feature>
<feature type="helix" evidence="13">
    <location>
        <begin position="30"/>
        <end position="43"/>
    </location>
</feature>
<feature type="helix" evidence="13">
    <location>
        <begin position="53"/>
        <end position="56"/>
    </location>
</feature>
<feature type="helix" evidence="13">
    <location>
        <begin position="60"/>
        <end position="73"/>
    </location>
</feature>
<feature type="helix" evidence="13">
    <location>
        <begin position="80"/>
        <end position="82"/>
    </location>
</feature>
<feature type="helix" evidence="13">
    <location>
        <begin position="83"/>
        <end position="88"/>
    </location>
</feature>
<feature type="helix" evidence="13">
    <location>
        <begin position="94"/>
        <end position="107"/>
    </location>
</feature>
<feature type="helix" evidence="13">
    <location>
        <begin position="112"/>
        <end position="114"/>
    </location>
</feature>
<feature type="helix" evidence="13">
    <location>
        <begin position="117"/>
        <end position="127"/>
    </location>
</feature>
<feature type="helix" evidence="13">
    <location>
        <begin position="131"/>
        <end position="144"/>
    </location>
</feature>
<feature type="strand" evidence="13">
    <location>
        <begin position="147"/>
        <end position="149"/>
    </location>
</feature>
<feature type="helix" evidence="13">
    <location>
        <begin position="153"/>
        <end position="156"/>
    </location>
</feature>
<feature type="strand" evidence="13">
    <location>
        <begin position="170"/>
        <end position="174"/>
    </location>
</feature>
<feature type="helix" evidence="13">
    <location>
        <begin position="179"/>
        <end position="182"/>
    </location>
</feature>
<feature type="helix" evidence="13">
    <location>
        <begin position="187"/>
        <end position="199"/>
    </location>
</feature>
<feature type="strand" evidence="13">
    <location>
        <begin position="201"/>
        <end position="203"/>
    </location>
</feature>
<feature type="helix" evidence="13">
    <location>
        <begin position="204"/>
        <end position="206"/>
    </location>
</feature>
<feature type="helix" evidence="13">
    <location>
        <begin position="209"/>
        <end position="218"/>
    </location>
</feature>
<feature type="strand" evidence="13">
    <location>
        <begin position="220"/>
        <end position="224"/>
    </location>
</feature>
<feature type="strand" evidence="13">
    <location>
        <begin position="232"/>
        <end position="234"/>
    </location>
</feature>
<feature type="helix" evidence="13">
    <location>
        <begin position="253"/>
        <end position="260"/>
    </location>
</feature>
<feature type="helix" evidence="13">
    <location>
        <begin position="269"/>
        <end position="275"/>
    </location>
</feature>
<feature type="helix" evidence="13">
    <location>
        <begin position="279"/>
        <end position="291"/>
    </location>
</feature>
<feature type="strand" evidence="13">
    <location>
        <begin position="294"/>
        <end position="297"/>
    </location>
</feature>
<feature type="turn" evidence="13">
    <location>
        <begin position="304"/>
        <end position="306"/>
    </location>
</feature>
<feature type="strand" evidence="15">
    <location>
        <begin position="377"/>
        <end position="381"/>
    </location>
</feature>
<feature type="helix" evidence="15">
    <location>
        <begin position="384"/>
        <end position="391"/>
    </location>
</feature>
<feature type="helix" evidence="15">
    <location>
        <begin position="399"/>
        <end position="407"/>
    </location>
</feature>
<feature type="helix" evidence="15">
    <location>
        <begin position="414"/>
        <end position="426"/>
    </location>
</feature>
<feature type="helix" evidence="15">
    <location>
        <begin position="437"/>
        <end position="451"/>
    </location>
</feature>
<feature type="strand" evidence="14">
    <location>
        <begin position="452"/>
        <end position="455"/>
    </location>
</feature>
<feature type="strand" evidence="15">
    <location>
        <begin position="474"/>
        <end position="476"/>
    </location>
</feature>
<feature type="turn" evidence="15">
    <location>
        <begin position="494"/>
        <end position="497"/>
    </location>
</feature>
<feature type="strand" evidence="15">
    <location>
        <begin position="498"/>
        <end position="505"/>
    </location>
</feature>
<feature type="strand" evidence="15">
    <location>
        <begin position="520"/>
        <end position="523"/>
    </location>
</feature>
<feature type="turn" evidence="15">
    <location>
        <begin position="527"/>
        <end position="530"/>
    </location>
</feature>
<feature type="helix" evidence="15">
    <location>
        <begin position="533"/>
        <end position="542"/>
    </location>
</feature>
<feature type="strand" evidence="15">
    <location>
        <begin position="548"/>
        <end position="551"/>
    </location>
</feature>
<feature type="helix" evidence="15">
    <location>
        <begin position="562"/>
        <end position="564"/>
    </location>
</feature>
<feature type="strand" evidence="15">
    <location>
        <begin position="568"/>
        <end position="574"/>
    </location>
</feature>
<feature type="strand" evidence="15">
    <location>
        <begin position="580"/>
        <end position="584"/>
    </location>
</feature>
<feature type="helix" evidence="15">
    <location>
        <begin position="587"/>
        <end position="594"/>
    </location>
</feature>
<feature type="turn" evidence="15">
    <location>
        <begin position="595"/>
        <end position="597"/>
    </location>
</feature>
<feature type="strand" evidence="15">
    <location>
        <begin position="600"/>
        <end position="610"/>
    </location>
</feature>
<feature type="strand" evidence="15">
    <location>
        <begin position="612"/>
        <end position="619"/>
    </location>
</feature>
<feature type="turn" evidence="15">
    <location>
        <begin position="622"/>
        <end position="624"/>
    </location>
</feature>
<feature type="strand" evidence="15">
    <location>
        <begin position="625"/>
        <end position="627"/>
    </location>
</feature>
<feature type="helix" evidence="15">
    <location>
        <begin position="638"/>
        <end position="644"/>
    </location>
</feature>
<feature type="strand" evidence="15">
    <location>
        <begin position="654"/>
        <end position="660"/>
    </location>
</feature>
<feature type="helix" evidence="15">
    <location>
        <begin position="717"/>
        <end position="719"/>
    </location>
</feature>
<feature type="strand" evidence="15">
    <location>
        <begin position="721"/>
        <end position="730"/>
    </location>
</feature>
<feature type="helix" evidence="15">
    <location>
        <begin position="735"/>
        <end position="747"/>
    </location>
</feature>
<feature type="strand" evidence="15">
    <location>
        <begin position="749"/>
        <end position="751"/>
    </location>
</feature>
<feature type="helix" evidence="15">
    <location>
        <begin position="752"/>
        <end position="754"/>
    </location>
</feature>
<feature type="helix" evidence="15">
    <location>
        <begin position="756"/>
        <end position="775"/>
    </location>
</feature>
<feature type="strand" evidence="15">
    <location>
        <begin position="812"/>
        <end position="815"/>
    </location>
</feature>
<feature type="strand" evidence="15">
    <location>
        <begin position="818"/>
        <end position="821"/>
    </location>
</feature>
<proteinExistence type="evidence at protein level"/>
<evidence type="ECO:0000256" key="1">
    <source>
        <dbReference type="SAM" id="MobiDB-lite"/>
    </source>
</evidence>
<evidence type="ECO:0000269" key="2">
    <source>
    </source>
</evidence>
<evidence type="ECO:0000269" key="3">
    <source>
    </source>
</evidence>
<evidence type="ECO:0000269" key="4">
    <source>
    </source>
</evidence>
<evidence type="ECO:0000269" key="5">
    <source>
    </source>
</evidence>
<evidence type="ECO:0000269" key="6">
    <source ref="1"/>
</evidence>
<evidence type="ECO:0000305" key="7"/>
<evidence type="ECO:0007744" key="8">
    <source>
    </source>
</evidence>
<evidence type="ECO:0007744" key="9">
    <source>
    </source>
</evidence>
<evidence type="ECO:0007744" key="10">
    <source>
    </source>
</evidence>
<evidence type="ECO:0007744" key="11">
    <source>
    </source>
</evidence>
<evidence type="ECO:0007744" key="12">
    <source>
    </source>
</evidence>
<evidence type="ECO:0007829" key="13">
    <source>
        <dbReference type="PDB" id="8JJ9"/>
    </source>
</evidence>
<evidence type="ECO:0007829" key="14">
    <source>
        <dbReference type="PDB" id="8XFB"/>
    </source>
</evidence>
<evidence type="ECO:0007829" key="15">
    <source>
        <dbReference type="PDB" id="8Z9M"/>
    </source>
</evidence>
<sequence length="838" mass="93909">MNIDVEFHIRHNYPWNKLPANVRQSLGNSQREYEKQVVLYSIRNQLRYRNNLVKHVKKDERRYYEELLKYSRDHLMLYPYHLSDIMVKGLRITPFSYYTGIMEDIMNSEKSYDSLPNFTAADCLRLLGIGRNQYIDLMNQCRSSKKFFRRKTARDLLPIKPVEIAIEAWWVVQAGYITEDDIKICTLPEKCAVDKIIDSGPQLSGSLDYNVVHSLYNKGFIYLDVPISDDSCIAVPPLEGFVMNRVQGDYFETLLYKIFVSIDEHTNVAELANVLEIDLSLVKNAVSMYCRLGFAHKKGQVINLDQLHSSWKNVPSVNRLKSTLDPQKMLLSWDGGESRSPVQEASSATDTDTNSQEDPADTASVSSLSLSTGHTKRIAFLFDSTLTAFLMMGNLSPNLKSHAVTMFEVGKLSDESLDSFLIELEKVQSTGEGEAQRYFDHALTLRNTILFLRHNKDLVAQTAQPDQPNYGFPLDLLRCESLLGLDPATCSRVLNKNYTLLVSMAPLTNEIRPVSSCTPQHIGPAIPEVSSVWFKLYIYHVTGQGPPSLLLSKGTRLRKLPDIFQSYDRLLITSWGHDPGVVPTSNVLTMLNDALTHSAVLIQGHGLHGIGETVHVPFPFDETELQGEFTRVNMGVHKALQILRNRVDLQHLCGYVTMLNASSQLADRKLSDASDERGEPDLASGSDVNGSTESFEMVIEEATIDSATKQTSGATTEADWVPLELCFGIPLFSSELNRKVCRKIAAHGLCRKESLQNLLHSSRKLSLQVLNFVHSFQEGASILDIHTEPSFSSLLSQSSCADMGVPLPAKNLIFKDGVLSEWSGRSPSSLLIANLHLQ</sequence>
<name>F91A1_HUMAN</name>
<keyword id="KW-0002">3D-structure</keyword>
<keyword id="KW-0968">Cytoplasmic vesicle</keyword>
<keyword id="KW-0333">Golgi apparatus</keyword>
<keyword id="KW-0597">Phosphoprotein</keyword>
<keyword id="KW-1267">Proteomics identification</keyword>
<keyword id="KW-1185">Reference proteome</keyword>
<accession>Q658Y4</accession>
<accession>B6YY23</accession>
<accession>Q658T5</accession>
<accession>Q8TE89</accession>
<protein>
    <recommendedName>
        <fullName>Protein FAM91A1</fullName>
    </recommendedName>
</protein>
<gene>
    <name type="primary">FAM91A1</name>
</gene>
<dbReference type="EMBL" id="DQ228141">
    <property type="protein sequence ID" value="ABB17070.1"/>
    <property type="molecule type" value="mRNA"/>
</dbReference>
<dbReference type="EMBL" id="AC011134">
    <property type="status" value="NOT_ANNOTATED_CDS"/>
    <property type="molecule type" value="Genomic_DNA"/>
</dbReference>
<dbReference type="EMBL" id="AK074370">
    <property type="protein sequence ID" value="BAB85063.1"/>
    <property type="status" value="ALT_INIT"/>
    <property type="molecule type" value="mRNA"/>
</dbReference>
<dbReference type="EMBL" id="AL832830">
    <property type="protein sequence ID" value="CAH56231.1"/>
    <property type="molecule type" value="mRNA"/>
</dbReference>
<dbReference type="EMBL" id="AL832999">
    <property type="protein sequence ID" value="CAH56297.1"/>
    <property type="molecule type" value="mRNA"/>
</dbReference>
<dbReference type="CCDS" id="CCDS6346.2"/>
<dbReference type="RefSeq" id="NP_001304846.1">
    <property type="nucleotide sequence ID" value="NM_001317917.1"/>
</dbReference>
<dbReference type="RefSeq" id="NP_001304847.1">
    <property type="nucleotide sequence ID" value="NM_001317918.1"/>
</dbReference>
<dbReference type="RefSeq" id="NP_659400.3">
    <property type="nucleotide sequence ID" value="NM_144963.4"/>
</dbReference>
<dbReference type="PDB" id="8JJ9">
    <property type="method" value="X-ray"/>
    <property type="resolution" value="2.51 A"/>
    <property type="chains" value="A/B=1-312"/>
</dbReference>
<dbReference type="PDB" id="8XFB">
    <property type="method" value="EM"/>
    <property type="resolution" value="3.40 A"/>
    <property type="chains" value="A=1-838"/>
</dbReference>
<dbReference type="PDB" id="8Z9M">
    <property type="method" value="EM"/>
    <property type="resolution" value="3.30 A"/>
    <property type="chains" value="A/C=1-838"/>
</dbReference>
<dbReference type="PDBsum" id="8JJ9"/>
<dbReference type="PDBsum" id="8XFB"/>
<dbReference type="PDBsum" id="8Z9M"/>
<dbReference type="EMDB" id="EMD-38300"/>
<dbReference type="EMDB" id="EMD-39863"/>
<dbReference type="SMR" id="Q658Y4"/>
<dbReference type="BioGRID" id="127622">
    <property type="interactions" value="175"/>
</dbReference>
<dbReference type="FunCoup" id="Q658Y4">
    <property type="interactions" value="2915"/>
</dbReference>
<dbReference type="IntAct" id="Q658Y4">
    <property type="interactions" value="84"/>
</dbReference>
<dbReference type="MINT" id="Q658Y4"/>
<dbReference type="STRING" id="9606.ENSP00000335082"/>
<dbReference type="ChEMBL" id="CHEMBL5465320"/>
<dbReference type="GlyGen" id="Q658Y4">
    <property type="glycosylation" value="1 site, 1 O-linked glycan (1 site)"/>
</dbReference>
<dbReference type="iPTMnet" id="Q658Y4"/>
<dbReference type="PhosphoSitePlus" id="Q658Y4"/>
<dbReference type="BioMuta" id="FAM91A1"/>
<dbReference type="DMDM" id="212276508"/>
<dbReference type="jPOST" id="Q658Y4"/>
<dbReference type="MassIVE" id="Q658Y4"/>
<dbReference type="PaxDb" id="9606-ENSP00000335082"/>
<dbReference type="PeptideAtlas" id="Q658Y4"/>
<dbReference type="ProteomicsDB" id="65930"/>
<dbReference type="Pumba" id="Q658Y4"/>
<dbReference type="Antibodypedia" id="27033">
    <property type="antibodies" value="119 antibodies from 17 providers"/>
</dbReference>
<dbReference type="DNASU" id="157769"/>
<dbReference type="Ensembl" id="ENST00000334705.12">
    <property type="protein sequence ID" value="ENSP00000335082.7"/>
    <property type="gene ID" value="ENSG00000176853.16"/>
</dbReference>
<dbReference type="GeneID" id="157769"/>
<dbReference type="KEGG" id="hsa:157769"/>
<dbReference type="MANE-Select" id="ENST00000334705.12">
    <property type="protein sequence ID" value="ENSP00000335082.7"/>
    <property type="RefSeq nucleotide sequence ID" value="NM_144963.4"/>
    <property type="RefSeq protein sequence ID" value="NP_659400.3"/>
</dbReference>
<dbReference type="UCSC" id="uc003yqv.4">
    <property type="organism name" value="human"/>
</dbReference>
<dbReference type="AGR" id="HGNC:26306"/>
<dbReference type="CTD" id="157769"/>
<dbReference type="DisGeNET" id="157769"/>
<dbReference type="GeneCards" id="FAM91A1"/>
<dbReference type="HGNC" id="HGNC:26306">
    <property type="gene designation" value="FAM91A1"/>
</dbReference>
<dbReference type="HPA" id="ENSG00000176853">
    <property type="expression patterns" value="Low tissue specificity"/>
</dbReference>
<dbReference type="neXtProt" id="NX_Q658Y4"/>
<dbReference type="OpenTargets" id="ENSG00000176853"/>
<dbReference type="PharmGKB" id="PA142671820"/>
<dbReference type="VEuPathDB" id="HostDB:ENSG00000176853"/>
<dbReference type="eggNOG" id="KOG3707">
    <property type="taxonomic scope" value="Eukaryota"/>
</dbReference>
<dbReference type="GeneTree" id="ENSGT00390000009543"/>
<dbReference type="InParanoid" id="Q658Y4"/>
<dbReference type="OMA" id="HYESFPF"/>
<dbReference type="OrthoDB" id="275996at2759"/>
<dbReference type="PAN-GO" id="Q658Y4">
    <property type="GO annotations" value="4 GO annotations based on evolutionary models"/>
</dbReference>
<dbReference type="PhylomeDB" id="Q658Y4"/>
<dbReference type="TreeFam" id="TF314641"/>
<dbReference type="PathwayCommons" id="Q658Y4"/>
<dbReference type="Reactome" id="R-HSA-9013407">
    <property type="pathway name" value="RHOH GTPase cycle"/>
</dbReference>
<dbReference type="SignaLink" id="Q658Y4"/>
<dbReference type="BioGRID-ORCS" id="157769">
    <property type="hits" value="142 hits in 1131 CRISPR screens"/>
</dbReference>
<dbReference type="ChiTaRS" id="FAM91A1">
    <property type="organism name" value="human"/>
</dbReference>
<dbReference type="GenomeRNAi" id="157769"/>
<dbReference type="Pharos" id="Q658Y4">
    <property type="development level" value="Tbio"/>
</dbReference>
<dbReference type="PRO" id="PR:Q658Y4"/>
<dbReference type="Proteomes" id="UP000005640">
    <property type="component" value="Chromosome 8"/>
</dbReference>
<dbReference type="RNAct" id="Q658Y4">
    <property type="molecule type" value="protein"/>
</dbReference>
<dbReference type="Bgee" id="ENSG00000176853">
    <property type="expression patterns" value="Expressed in ileal mucosa and 187 other cell types or tissues"/>
</dbReference>
<dbReference type="ExpressionAtlas" id="Q658Y4">
    <property type="expression patterns" value="baseline and differential"/>
</dbReference>
<dbReference type="GO" id="GO:0031410">
    <property type="term" value="C:cytoplasmic vesicle"/>
    <property type="evidence" value="ECO:0000314"/>
    <property type="project" value="UniProtKB"/>
</dbReference>
<dbReference type="GO" id="GO:0005802">
    <property type="term" value="C:trans-Golgi network"/>
    <property type="evidence" value="ECO:0000314"/>
    <property type="project" value="UniProtKB"/>
</dbReference>
<dbReference type="GO" id="GO:0006886">
    <property type="term" value="P:intracellular protein transport"/>
    <property type="evidence" value="ECO:0000314"/>
    <property type="project" value="UniProtKB"/>
</dbReference>
<dbReference type="GO" id="GO:0099041">
    <property type="term" value="P:vesicle tethering to Golgi"/>
    <property type="evidence" value="ECO:0000314"/>
    <property type="project" value="UniProtKB"/>
</dbReference>
<dbReference type="InterPro" id="IPR039199">
    <property type="entry name" value="FAM91"/>
</dbReference>
<dbReference type="InterPro" id="IPR028097">
    <property type="entry name" value="FAM91_C_dom"/>
</dbReference>
<dbReference type="InterPro" id="IPR028091">
    <property type="entry name" value="FAM91_N_dom"/>
</dbReference>
<dbReference type="PANTHER" id="PTHR28441">
    <property type="entry name" value="PROTEIN FAM91A1"/>
    <property type="match status" value="1"/>
</dbReference>
<dbReference type="PANTHER" id="PTHR28441:SF4">
    <property type="entry name" value="PROTEIN FAM91A1"/>
    <property type="match status" value="1"/>
</dbReference>
<dbReference type="Pfam" id="PF14648">
    <property type="entry name" value="FAM91_C"/>
    <property type="match status" value="1"/>
</dbReference>
<dbReference type="Pfam" id="PF14647">
    <property type="entry name" value="FAM91_N"/>
    <property type="match status" value="1"/>
</dbReference>
<organism>
    <name type="scientific">Homo sapiens</name>
    <name type="common">Human</name>
    <dbReference type="NCBI Taxonomy" id="9606"/>
    <lineage>
        <taxon>Eukaryota</taxon>
        <taxon>Metazoa</taxon>
        <taxon>Chordata</taxon>
        <taxon>Craniata</taxon>
        <taxon>Vertebrata</taxon>
        <taxon>Euteleostomi</taxon>
        <taxon>Mammalia</taxon>
        <taxon>Eutheria</taxon>
        <taxon>Euarchontoglires</taxon>
        <taxon>Primates</taxon>
        <taxon>Haplorrhini</taxon>
        <taxon>Catarrhini</taxon>
        <taxon>Hominidae</taxon>
        <taxon>Homo</taxon>
    </lineage>
</organism>
<comment type="function">
    <text evidence="5">As component of the WDR11 complex acts together with TBC1D23 to facilitate the golgin-mediated capture of vesicles generated using AP-1.</text>
</comment>
<comment type="subunit">
    <text evidence="4 5">Component of the complex WDR11 composed of C17orf75, FAM91A1 and WDR11; FAM91A1 and WDR11 are required for proper location of the complex (PubMed:29426865). Interacts with golgins GOLGA1 and GOLGA4 and with TBC1D23; interaction with golgins may be mediated by TBC1D23 and interaction with TBC1D23 recruits TBC1D23 to AP-1-derived vesicles (PubMed:29084197, PubMed:29426865).</text>
</comment>
<comment type="subcellular location">
    <subcellularLocation>
        <location evidence="4 5">Golgi apparatus</location>
        <location evidence="4 5">trans-Golgi network</location>
    </subcellularLocation>
    <subcellularLocation>
        <location evidence="5">Cytoplasmic vesicle</location>
    </subcellularLocation>
    <text evidence="4">Recruitment to the TGN requires the presence of GOLGA1, GOLGA4 and TBC1D23.</text>
</comment>
<comment type="similarity">
    <text evidence="7">Belongs to the FAM91 family.</text>
</comment>
<comment type="sequence caution" evidence="7">
    <conflict type="erroneous initiation">
        <sequence resource="EMBL-CDS" id="BAB85063"/>
    </conflict>
    <text>Truncated N-terminus.</text>
</comment>